<organism>
    <name type="scientific">Ovis aries</name>
    <name type="common">Sheep</name>
    <dbReference type="NCBI Taxonomy" id="9940"/>
    <lineage>
        <taxon>Eukaryota</taxon>
        <taxon>Metazoa</taxon>
        <taxon>Chordata</taxon>
        <taxon>Craniata</taxon>
        <taxon>Vertebrata</taxon>
        <taxon>Euteleostomi</taxon>
        <taxon>Mammalia</taxon>
        <taxon>Eutheria</taxon>
        <taxon>Laurasiatheria</taxon>
        <taxon>Artiodactyla</taxon>
        <taxon>Ruminantia</taxon>
        <taxon>Pecora</taxon>
        <taxon>Bovidae</taxon>
        <taxon>Caprinae</taxon>
        <taxon>Ovis</taxon>
    </lineage>
</organism>
<protein>
    <recommendedName>
        <fullName>Interferon tau-5</fullName>
        <shortName>IFN-tau-5</shortName>
    </recommendedName>
    <alternativeName>
        <fullName>Antiluteolysin</fullName>
    </alternativeName>
    <alternativeName>
        <fullName>P5</fullName>
    </alternativeName>
    <alternativeName>
        <fullName>Trophoblast antiluteolytic protein</fullName>
    </alternativeName>
    <alternativeName>
        <fullName>Trophoblast protein 1</fullName>
        <shortName>TP-1</shortName>
    </alternativeName>
    <alternativeName>
        <fullName>Trophoblastin</fullName>
    </alternativeName>
</protein>
<name>IFNT5_SHEEP</name>
<comment type="function">
    <text evidence="2">Paracrine hormone primarily responsible for maternal recognition of pregnancy. Interacts with endometrial receptors, probably type I interferon receptors, and blocks estrogen receptor expression, preventing the estrogen-induced increase in oxytocin receptor expression in the endometrium. This results in the suppression of the pulsatile endometrial release of the luteolytic hormone prostaglandin F2-alpha, hindering the regression of the corpus luteum (luteolysis) and therefore a return to ovarian cyclicity. This, and a possible direct effect of IFN-tau on prostaglandin synthesis, leads in turn to continued ovarian progesterone secretion, which stimulates the secretion by the endometrium of the nutrients required for the growth of the conceptus. In summary, displays particularly high antiviral and antiproliferative potency concurrently with particular weak cytotoxicity, high antiluteolytic activity and immunomodulatory properties. In contrast with other IFNs, IFN-tau is not virally inducible.</text>
</comment>
<comment type="subcellular location">
    <subcellularLocation>
        <location>Secreted</location>
    </subcellularLocation>
    <text>Secreted into the uterine lumen.</text>
</comment>
<comment type="tissue specificity">
    <text>Constitutively and exclusively expressed in the mononuclear cells of the extraembryonic trophectoderm.</text>
</comment>
<comment type="developmental stage">
    <text>Major secretory product synthesized by the sheep conceptus between days 13 and 21 of pregnancy.</text>
</comment>
<comment type="miscellaneous">
    <text>IFN-tau genes are intronless. They evolved from IFN-omega genes in the ruminantia suborder and have continued to duplicate independently in different lineages of the ruminantia. They code for proteins very similar in sequence but with different biological potency and pattern of expression.</text>
</comment>
<comment type="similarity">
    <text evidence="3">Belongs to the alpha/beta interferon family. IFN-alphaII subfamily.</text>
</comment>
<evidence type="ECO:0000250" key="1"/>
<evidence type="ECO:0000269" key="2">
    <source>
    </source>
</evidence>
<evidence type="ECO:0000305" key="3"/>
<feature type="signal peptide" evidence="1">
    <location>
        <begin position="1"/>
        <end position="23"/>
    </location>
</feature>
<feature type="chain" id="PRO_0000016416" description="Interferon tau-5">
    <location>
        <begin position="24"/>
        <end position="195"/>
    </location>
</feature>
<feature type="disulfide bond" evidence="1">
    <location>
        <begin position="24"/>
        <end position="122"/>
    </location>
</feature>
<feature type="disulfide bond" evidence="1">
    <location>
        <begin position="52"/>
        <end position="162"/>
    </location>
</feature>
<accession>Q28595</accession>
<sequence length="195" mass="22163">MAFVLSLLMALVLVSYGPGGSLGCYLSQRLMLDAKENLKLLDRMNRLSPHSCLQDRKDFGLPQEMVEGDQLQKDQAFPVLYEMLQQSFNLFYTEHSSAAWDTTLLEQLCTGLQQQLDHLDTCRDQVMGEKDSELGNVDPIVTVKKYFQGIHDYLQEKGYSDCAWEIVRVEMMRALTVSTTLQKRLTKMGGDLNSP</sequence>
<dbReference type="EMBL" id="X56342">
    <property type="protein sequence ID" value="CAA39782.1"/>
    <property type="molecule type" value="mRNA"/>
</dbReference>
<dbReference type="RefSeq" id="NP_001116873.1">
    <property type="nucleotide sequence ID" value="NM_001123401.1"/>
</dbReference>
<dbReference type="SMR" id="Q28595"/>
<dbReference type="Ensembl" id="ENSOART00225060939">
    <property type="protein sequence ID" value="ENSOARP00225030640"/>
    <property type="gene ID" value="ENSOARG00225036817"/>
</dbReference>
<dbReference type="Ensembl" id="ENSOART00225060941">
    <property type="protein sequence ID" value="ENSOARP00225030642"/>
    <property type="gene ID" value="ENSOARG00225036819"/>
</dbReference>
<dbReference type="GeneID" id="100144752"/>
<dbReference type="KEGG" id="oas:100144752"/>
<dbReference type="CTD" id="100144752"/>
<dbReference type="OrthoDB" id="9833506at2759"/>
<dbReference type="Proteomes" id="UP000002356">
    <property type="component" value="Unplaced"/>
</dbReference>
<dbReference type="GO" id="GO:0005615">
    <property type="term" value="C:extracellular space"/>
    <property type="evidence" value="ECO:0007669"/>
    <property type="project" value="UniProtKB-KW"/>
</dbReference>
<dbReference type="GO" id="GO:0005125">
    <property type="term" value="F:cytokine activity"/>
    <property type="evidence" value="ECO:0007669"/>
    <property type="project" value="UniProtKB-KW"/>
</dbReference>
<dbReference type="GO" id="GO:0005126">
    <property type="term" value="F:cytokine receptor binding"/>
    <property type="evidence" value="ECO:0007669"/>
    <property type="project" value="InterPro"/>
</dbReference>
<dbReference type="GO" id="GO:0005179">
    <property type="term" value="F:hormone activity"/>
    <property type="evidence" value="ECO:0007669"/>
    <property type="project" value="UniProtKB-KW"/>
</dbReference>
<dbReference type="GO" id="GO:0051607">
    <property type="term" value="P:defense response to virus"/>
    <property type="evidence" value="ECO:0007669"/>
    <property type="project" value="UniProtKB-KW"/>
</dbReference>
<dbReference type="GO" id="GO:0007565">
    <property type="term" value="P:female pregnancy"/>
    <property type="evidence" value="ECO:0007669"/>
    <property type="project" value="UniProtKB-KW"/>
</dbReference>
<dbReference type="CDD" id="cd00095">
    <property type="entry name" value="IFab"/>
    <property type="match status" value="1"/>
</dbReference>
<dbReference type="FunFam" id="1.20.1250.10:FF:000001">
    <property type="entry name" value="Interferon alpha"/>
    <property type="match status" value="1"/>
</dbReference>
<dbReference type="Gene3D" id="1.20.1250.10">
    <property type="match status" value="1"/>
</dbReference>
<dbReference type="InterPro" id="IPR009079">
    <property type="entry name" value="4_helix_cytokine-like_core"/>
</dbReference>
<dbReference type="InterPro" id="IPR000471">
    <property type="entry name" value="Interferon_alpha/beta/delta"/>
</dbReference>
<dbReference type="PANTHER" id="PTHR11691:SF37">
    <property type="entry name" value="INTERFERON OMEGA-1"/>
    <property type="match status" value="1"/>
</dbReference>
<dbReference type="PANTHER" id="PTHR11691">
    <property type="entry name" value="TYPE I INTERFERON"/>
    <property type="match status" value="1"/>
</dbReference>
<dbReference type="Pfam" id="PF00143">
    <property type="entry name" value="Interferon"/>
    <property type="match status" value="1"/>
</dbReference>
<dbReference type="PRINTS" id="PR00266">
    <property type="entry name" value="INTERFERONAB"/>
</dbReference>
<dbReference type="SMART" id="SM00076">
    <property type="entry name" value="IFabd"/>
    <property type="match status" value="1"/>
</dbReference>
<dbReference type="SUPFAM" id="SSF47266">
    <property type="entry name" value="4-helical cytokines"/>
    <property type="match status" value="1"/>
</dbReference>
<dbReference type="PROSITE" id="PS00252">
    <property type="entry name" value="INTERFERON_A_B_D"/>
    <property type="match status" value="1"/>
</dbReference>
<proteinExistence type="evidence at transcript level"/>
<reference key="1">
    <citation type="journal article" date="1990" name="Nucleic Acids Res.">
        <title>Sequence variability among ovine trophoblast interferon cDNA.</title>
        <authorList>
            <person name="Klemann S.W."/>
            <person name="Imakawa K."/>
            <person name="Roberts R.M."/>
        </authorList>
    </citation>
    <scope>NUCLEOTIDE SEQUENCE [MRNA]</scope>
</reference>
<reference key="2">
    <citation type="journal article" date="1996" name="Endocrinology">
        <title>Ovine interferon tau suppresses transcription of the estrogen receptor and oxytocin receptor genes in the ovine endometrium.</title>
        <authorList>
            <person name="Spencer T.E."/>
            <person name="Bazer F.W."/>
        </authorList>
    </citation>
    <scope>FUNCTION</scope>
</reference>
<reference key="3">
    <citation type="journal article" date="1994" name="Protein Eng.">
        <title>Predicted structural motif of IFN tau.</title>
        <authorList>
            <person name="Jarpe M.A."/>
            <person name="Johnson H.M."/>
            <person name="Bazer F.W."/>
            <person name="Ott T.L."/>
            <person name="Curto E.V."/>
            <person name="Krishna N.R."/>
            <person name="Pontzer C.H."/>
        </authorList>
    </citation>
    <scope>CIRCULAR DICHROISM ANALYSIS</scope>
    <scope>3D-STRUCTURE MODELING</scope>
</reference>
<reference key="4">
    <citation type="journal article" date="1995" name="J. Interferon Cytokine Res.">
        <title>A three-dimensional model of interferon-tau.</title>
        <authorList>
            <person name="Senda T."/>
            <person name="Saitoh S."/>
            <person name="Mitsui Y."/>
            <person name="Li J."/>
            <person name="Roberts R.M."/>
        </authorList>
    </citation>
    <scope>3D-STRUCTURE MODELING</scope>
</reference>
<reference key="5">
    <citation type="journal article" date="1998" name="Biochimie">
        <title>IFN-tau: a novel subtype I IFN1. Structural characteristics, non-ubiquitous expression, structure-function relationships, a pregnancy hormonal embryonic signal and cross-species therapeutic potentialities.</title>
        <authorList>
            <person name="Martal J.L."/>
            <person name="Chene N.M."/>
            <person name="Huynh L.P."/>
            <person name="L'Haridon R.M."/>
            <person name="Reinaud P.B."/>
            <person name="Guillomot M.W."/>
            <person name="Charlier M.A."/>
            <person name="Charpigny S.Y."/>
        </authorList>
    </citation>
    <scope>REVIEW</scope>
</reference>
<keyword id="KW-0051">Antiviral defense</keyword>
<keyword id="KW-0202">Cytokine</keyword>
<keyword id="KW-1015">Disulfide bond</keyword>
<keyword id="KW-0372">Hormone</keyword>
<keyword id="KW-0635">Pregnancy</keyword>
<keyword id="KW-1185">Reference proteome</keyword>
<keyword id="KW-0964">Secreted</keyword>
<keyword id="KW-0732">Signal</keyword>
<gene>
    <name type="primary">IFNT5</name>
</gene>